<accession>P47837</accession>
<organism>
    <name type="scientific">Candida albicans</name>
    <name type="common">Yeast</name>
    <dbReference type="NCBI Taxonomy" id="5476"/>
    <lineage>
        <taxon>Eukaryota</taxon>
        <taxon>Fungi</taxon>
        <taxon>Dikarya</taxon>
        <taxon>Ascomycota</taxon>
        <taxon>Saccharomycotina</taxon>
        <taxon>Pichiomycetes</taxon>
        <taxon>Debaryomycetaceae</taxon>
        <taxon>Candida/Lodderomyces clade</taxon>
        <taxon>Candida</taxon>
    </lineage>
</organism>
<proteinExistence type="inferred from homology"/>
<feature type="chain" id="PRO_0000130838" description="Small ribosomal subunit protein eS4">
    <location>
        <begin position="1"/>
        <end position="262"/>
    </location>
</feature>
<feature type="domain" description="S4 RNA-binding">
    <location>
        <begin position="42"/>
        <end position="105"/>
    </location>
</feature>
<comment type="similarity">
    <text evidence="1">Belongs to the eukaryotic ribosomal protein eS4 family.</text>
</comment>
<gene>
    <name type="primary">RPS4</name>
    <name type="synonym">RPS7</name>
</gene>
<keyword id="KW-0687">Ribonucleoprotein</keyword>
<keyword id="KW-0689">Ribosomal protein</keyword>
<keyword id="KW-0694">RNA-binding</keyword>
<keyword id="KW-0699">rRNA-binding</keyword>
<dbReference type="EMBL" id="U37009">
    <property type="protein sequence ID" value="AAC49871.1"/>
    <property type="molecule type" value="Genomic_DNA"/>
</dbReference>
<dbReference type="VEuPathDB" id="FungiDB:C2_10620W_A"/>
<dbReference type="VEuPathDB" id="FungiDB:CAWG_06124"/>
<dbReference type="GO" id="GO:0022627">
    <property type="term" value="C:cytosolic small ribosomal subunit"/>
    <property type="evidence" value="ECO:0007669"/>
    <property type="project" value="TreeGrafter"/>
</dbReference>
<dbReference type="GO" id="GO:0019843">
    <property type="term" value="F:rRNA binding"/>
    <property type="evidence" value="ECO:0007669"/>
    <property type="project" value="UniProtKB-KW"/>
</dbReference>
<dbReference type="GO" id="GO:0003735">
    <property type="term" value="F:structural constituent of ribosome"/>
    <property type="evidence" value="ECO:0007669"/>
    <property type="project" value="InterPro"/>
</dbReference>
<dbReference type="GO" id="GO:0006412">
    <property type="term" value="P:translation"/>
    <property type="evidence" value="ECO:0007669"/>
    <property type="project" value="InterPro"/>
</dbReference>
<dbReference type="CDD" id="cd06087">
    <property type="entry name" value="KOW_RPS4"/>
    <property type="match status" value="1"/>
</dbReference>
<dbReference type="FunFam" id="2.30.30.30:FF:000005">
    <property type="entry name" value="40S ribosomal protein S4"/>
    <property type="match status" value="1"/>
</dbReference>
<dbReference type="FunFam" id="2.40.50.740:FF:000001">
    <property type="entry name" value="40S ribosomal protein S4"/>
    <property type="match status" value="1"/>
</dbReference>
<dbReference type="FunFam" id="3.10.290.10:FF:000002">
    <property type="entry name" value="40S ribosomal protein S4"/>
    <property type="match status" value="1"/>
</dbReference>
<dbReference type="Gene3D" id="2.30.30.30">
    <property type="match status" value="1"/>
</dbReference>
<dbReference type="Gene3D" id="2.40.50.740">
    <property type="match status" value="1"/>
</dbReference>
<dbReference type="Gene3D" id="3.10.290.10">
    <property type="entry name" value="RNA-binding S4 domain"/>
    <property type="match status" value="1"/>
</dbReference>
<dbReference type="HAMAP" id="MF_00485">
    <property type="entry name" value="Ribosomal_eS4"/>
    <property type="match status" value="1"/>
</dbReference>
<dbReference type="InterPro" id="IPR005824">
    <property type="entry name" value="KOW"/>
</dbReference>
<dbReference type="InterPro" id="IPR014722">
    <property type="entry name" value="Rib_uL2_dom2"/>
</dbReference>
<dbReference type="InterPro" id="IPR000876">
    <property type="entry name" value="Ribosomal_eS4"/>
</dbReference>
<dbReference type="InterPro" id="IPR032277">
    <property type="entry name" value="Ribosomal_eS4_C"/>
</dbReference>
<dbReference type="InterPro" id="IPR013845">
    <property type="entry name" value="Ribosomal_eS4_central_region"/>
</dbReference>
<dbReference type="InterPro" id="IPR038237">
    <property type="entry name" value="Ribosomal_eS4_central_sf"/>
</dbReference>
<dbReference type="InterPro" id="IPR041982">
    <property type="entry name" value="Ribosomal_eS4_KOW"/>
</dbReference>
<dbReference type="InterPro" id="IPR013843">
    <property type="entry name" value="Ribosomal_eS4_N"/>
</dbReference>
<dbReference type="InterPro" id="IPR018199">
    <property type="entry name" value="Ribosomal_eS4_N_CS"/>
</dbReference>
<dbReference type="InterPro" id="IPR036986">
    <property type="entry name" value="S4_RNA-bd_sf"/>
</dbReference>
<dbReference type="PANTHER" id="PTHR11581">
    <property type="entry name" value="30S/40S RIBOSOMAL PROTEIN S4"/>
    <property type="match status" value="1"/>
</dbReference>
<dbReference type="PANTHER" id="PTHR11581:SF0">
    <property type="entry name" value="SMALL RIBOSOMAL SUBUNIT PROTEIN ES4"/>
    <property type="match status" value="1"/>
</dbReference>
<dbReference type="Pfam" id="PF16121">
    <property type="entry name" value="40S_S4_C"/>
    <property type="match status" value="1"/>
</dbReference>
<dbReference type="Pfam" id="PF00467">
    <property type="entry name" value="KOW"/>
    <property type="match status" value="1"/>
</dbReference>
<dbReference type="Pfam" id="PF00900">
    <property type="entry name" value="Ribosomal_S4e"/>
    <property type="match status" value="1"/>
</dbReference>
<dbReference type="Pfam" id="PF08071">
    <property type="entry name" value="RS4NT"/>
    <property type="match status" value="1"/>
</dbReference>
<dbReference type="PIRSF" id="PIRSF002116">
    <property type="entry name" value="Ribosomal_S4"/>
    <property type="match status" value="1"/>
</dbReference>
<dbReference type="PROSITE" id="PS00528">
    <property type="entry name" value="RIBOSOMAL_S4E"/>
    <property type="match status" value="1"/>
</dbReference>
<evidence type="ECO:0000305" key="1"/>
<sequence length="262" mass="29211">MGRGPKKHLKRLAAPSHWMLXKLSGTYAPRPSAGPHXLRESLPLXVFLRNRLXYALCGREVKAIMMQQHVQVVGKVRTDTTYPAGFMDVITLEATNEHFRLAYDVKGKFAVHRISAEEAVYKLGKVKKVQLGKKGVPYVVTHDGRTIRYPDPLIRANDTVKIDLATGKIXSFIKFDTGRLVMVTGGRNLGRVGVIVHREKLEGGFDLVHIKDALENTFVTRLSNVFVIGTEAGKPWVSLPKGKGIKLSISEERDRRXAQQGL</sequence>
<name>RS4_CANAX</name>
<reference key="1">
    <citation type="journal article" date="1997" name="Yeast">
        <title>Characterization and regulation of the genes encoding ribosomal proteins L39 and S7 of the human pathogen Candida albicans.</title>
        <authorList>
            <person name="Delbrueck S."/>
            <person name="Sonneborn A."/>
            <person name="Gerads M."/>
            <person name="Grablowitz A.H."/>
            <person name="Ernst J.F."/>
        </authorList>
    </citation>
    <scope>NUCLEOTIDE SEQUENCE [GENOMIC DNA]</scope>
    <source>
        <strain>SGY243</strain>
    </source>
</reference>
<protein>
    <recommendedName>
        <fullName evidence="1">Small ribosomal subunit protein eS4</fullName>
    </recommendedName>
    <alternativeName>
        <fullName>40S ribosomal protein S4</fullName>
    </alternativeName>
    <alternativeName>
        <fullName>S7</fullName>
    </alternativeName>
</protein>